<protein>
    <recommendedName>
        <fullName evidence="1">S-adenosylmethionine synthase</fullName>
        <shortName evidence="1">AdoMet synthase</shortName>
        <ecNumber evidence="1">2.5.1.6</ecNumber>
    </recommendedName>
    <alternativeName>
        <fullName evidence="1">MAT</fullName>
    </alternativeName>
    <alternativeName>
        <fullName evidence="1">Methionine adenosyltransferase</fullName>
    </alternativeName>
</protein>
<dbReference type="EC" id="2.5.1.6" evidence="1"/>
<dbReference type="EMBL" id="CP000453">
    <property type="protein sequence ID" value="ABI57604.1"/>
    <property type="molecule type" value="Genomic_DNA"/>
</dbReference>
<dbReference type="RefSeq" id="WP_011629998.1">
    <property type="nucleotide sequence ID" value="NC_008340.1"/>
</dbReference>
<dbReference type="SMR" id="Q0A6D3"/>
<dbReference type="KEGG" id="aeh:Mlg_2262"/>
<dbReference type="eggNOG" id="COG0192">
    <property type="taxonomic scope" value="Bacteria"/>
</dbReference>
<dbReference type="HOGENOM" id="CLU_041802_1_1_6"/>
<dbReference type="OrthoDB" id="9801686at2"/>
<dbReference type="UniPathway" id="UPA00315">
    <property type="reaction ID" value="UER00080"/>
</dbReference>
<dbReference type="Proteomes" id="UP000001962">
    <property type="component" value="Chromosome"/>
</dbReference>
<dbReference type="GO" id="GO:0005737">
    <property type="term" value="C:cytoplasm"/>
    <property type="evidence" value="ECO:0007669"/>
    <property type="project" value="UniProtKB-SubCell"/>
</dbReference>
<dbReference type="GO" id="GO:0005524">
    <property type="term" value="F:ATP binding"/>
    <property type="evidence" value="ECO:0007669"/>
    <property type="project" value="UniProtKB-UniRule"/>
</dbReference>
<dbReference type="GO" id="GO:0000287">
    <property type="term" value="F:magnesium ion binding"/>
    <property type="evidence" value="ECO:0007669"/>
    <property type="project" value="UniProtKB-UniRule"/>
</dbReference>
<dbReference type="GO" id="GO:0004478">
    <property type="term" value="F:methionine adenosyltransferase activity"/>
    <property type="evidence" value="ECO:0007669"/>
    <property type="project" value="UniProtKB-UniRule"/>
</dbReference>
<dbReference type="GO" id="GO:0006730">
    <property type="term" value="P:one-carbon metabolic process"/>
    <property type="evidence" value="ECO:0007669"/>
    <property type="project" value="UniProtKB-KW"/>
</dbReference>
<dbReference type="GO" id="GO:0006556">
    <property type="term" value="P:S-adenosylmethionine biosynthetic process"/>
    <property type="evidence" value="ECO:0007669"/>
    <property type="project" value="UniProtKB-UniRule"/>
</dbReference>
<dbReference type="CDD" id="cd18079">
    <property type="entry name" value="S-AdoMet_synt"/>
    <property type="match status" value="1"/>
</dbReference>
<dbReference type="FunFam" id="3.30.300.10:FF:000003">
    <property type="entry name" value="S-adenosylmethionine synthase"/>
    <property type="match status" value="1"/>
</dbReference>
<dbReference type="FunFam" id="3.30.300.10:FF:000004">
    <property type="entry name" value="S-adenosylmethionine synthase"/>
    <property type="match status" value="1"/>
</dbReference>
<dbReference type="Gene3D" id="3.30.300.10">
    <property type="match status" value="3"/>
</dbReference>
<dbReference type="HAMAP" id="MF_00086">
    <property type="entry name" value="S_AdoMet_synth1"/>
    <property type="match status" value="1"/>
</dbReference>
<dbReference type="InterPro" id="IPR022631">
    <property type="entry name" value="ADOMET_SYNTHASE_CS"/>
</dbReference>
<dbReference type="InterPro" id="IPR022630">
    <property type="entry name" value="S-AdoMet_synt_C"/>
</dbReference>
<dbReference type="InterPro" id="IPR022629">
    <property type="entry name" value="S-AdoMet_synt_central"/>
</dbReference>
<dbReference type="InterPro" id="IPR022628">
    <property type="entry name" value="S-AdoMet_synt_N"/>
</dbReference>
<dbReference type="InterPro" id="IPR002133">
    <property type="entry name" value="S-AdoMet_synthetase"/>
</dbReference>
<dbReference type="InterPro" id="IPR022636">
    <property type="entry name" value="S-AdoMet_synthetase_sfam"/>
</dbReference>
<dbReference type="NCBIfam" id="TIGR01034">
    <property type="entry name" value="metK"/>
    <property type="match status" value="1"/>
</dbReference>
<dbReference type="PANTHER" id="PTHR11964">
    <property type="entry name" value="S-ADENOSYLMETHIONINE SYNTHETASE"/>
    <property type="match status" value="1"/>
</dbReference>
<dbReference type="Pfam" id="PF02773">
    <property type="entry name" value="S-AdoMet_synt_C"/>
    <property type="match status" value="1"/>
</dbReference>
<dbReference type="Pfam" id="PF02772">
    <property type="entry name" value="S-AdoMet_synt_M"/>
    <property type="match status" value="1"/>
</dbReference>
<dbReference type="Pfam" id="PF00438">
    <property type="entry name" value="S-AdoMet_synt_N"/>
    <property type="match status" value="1"/>
</dbReference>
<dbReference type="PIRSF" id="PIRSF000497">
    <property type="entry name" value="MAT"/>
    <property type="match status" value="1"/>
</dbReference>
<dbReference type="SUPFAM" id="SSF55973">
    <property type="entry name" value="S-adenosylmethionine synthetase"/>
    <property type="match status" value="3"/>
</dbReference>
<dbReference type="PROSITE" id="PS00376">
    <property type="entry name" value="ADOMET_SYNTHASE_1"/>
    <property type="match status" value="1"/>
</dbReference>
<dbReference type="PROSITE" id="PS00377">
    <property type="entry name" value="ADOMET_SYNTHASE_2"/>
    <property type="match status" value="1"/>
</dbReference>
<accession>Q0A6D3</accession>
<sequence>MSEYLFTSESVSEGHPDKMADQISDAVLDAILAEDPRGRIACETMIKTGIIILGGEVTTSANIDYEAVARETVKRIGYKHHEMGFDGETCGVINILGKQSVDIAQGVDRDHPEEQGAGDQGLMFGYASNETDVLMPAPITYAHRLVQRQAEVRCNGQLPWLRPDAKSQVTLRYVDGRPVAVDTVVLSTQHAPDLTQAQVHEAVIEEIIKPVLPEQWITGETRYLVNPTGRFVIGGPVGDCGLTGRKIIVDTYGGMARHGGGCFSGKDPSKVDRSAAYACRYVAKNIVAAGLAERCEIQVSYAIGVAEPTSISVETFGTGRVDSEKLTRIVREHFDLRPYGILKMLDLIRPIYTATAAYGHFGREDEGFPWERIDRAEEIRDAAGL</sequence>
<organism>
    <name type="scientific">Alkalilimnicola ehrlichii (strain ATCC BAA-1101 / DSM 17681 / MLHE-1)</name>
    <dbReference type="NCBI Taxonomy" id="187272"/>
    <lineage>
        <taxon>Bacteria</taxon>
        <taxon>Pseudomonadati</taxon>
        <taxon>Pseudomonadota</taxon>
        <taxon>Gammaproteobacteria</taxon>
        <taxon>Chromatiales</taxon>
        <taxon>Ectothiorhodospiraceae</taxon>
        <taxon>Alkalilimnicola</taxon>
    </lineage>
</organism>
<gene>
    <name evidence="1" type="primary">metK</name>
    <name type="ordered locus">Mlg_2262</name>
</gene>
<feature type="chain" id="PRO_1000007922" description="S-adenosylmethionine synthase">
    <location>
        <begin position="1"/>
        <end position="385"/>
    </location>
</feature>
<feature type="region of interest" description="Flexible loop" evidence="1">
    <location>
        <begin position="99"/>
        <end position="109"/>
    </location>
</feature>
<feature type="binding site" description="in other chain" evidence="1">
    <location>
        <position position="15"/>
    </location>
    <ligand>
        <name>ATP</name>
        <dbReference type="ChEBI" id="CHEBI:30616"/>
        <note>ligand shared between two neighboring subunits</note>
    </ligand>
</feature>
<feature type="binding site" evidence="1">
    <location>
        <position position="17"/>
    </location>
    <ligand>
        <name>Mg(2+)</name>
        <dbReference type="ChEBI" id="CHEBI:18420"/>
    </ligand>
</feature>
<feature type="binding site" evidence="1">
    <location>
        <position position="43"/>
    </location>
    <ligand>
        <name>K(+)</name>
        <dbReference type="ChEBI" id="CHEBI:29103"/>
    </ligand>
</feature>
<feature type="binding site" description="in other chain" evidence="1">
    <location>
        <position position="56"/>
    </location>
    <ligand>
        <name>L-methionine</name>
        <dbReference type="ChEBI" id="CHEBI:57844"/>
        <note>ligand shared between two neighboring subunits</note>
    </ligand>
</feature>
<feature type="binding site" description="in other chain" evidence="1">
    <location>
        <position position="99"/>
    </location>
    <ligand>
        <name>L-methionine</name>
        <dbReference type="ChEBI" id="CHEBI:57844"/>
        <note>ligand shared between two neighboring subunits</note>
    </ligand>
</feature>
<feature type="binding site" description="in other chain" evidence="1">
    <location>
        <begin position="164"/>
        <end position="166"/>
    </location>
    <ligand>
        <name>ATP</name>
        <dbReference type="ChEBI" id="CHEBI:30616"/>
        <note>ligand shared between two neighboring subunits</note>
    </ligand>
</feature>
<feature type="binding site" description="in other chain" evidence="1">
    <location>
        <begin position="230"/>
        <end position="231"/>
    </location>
    <ligand>
        <name>ATP</name>
        <dbReference type="ChEBI" id="CHEBI:30616"/>
        <note>ligand shared between two neighboring subunits</note>
    </ligand>
</feature>
<feature type="binding site" evidence="1">
    <location>
        <position position="239"/>
    </location>
    <ligand>
        <name>ATP</name>
        <dbReference type="ChEBI" id="CHEBI:30616"/>
        <note>ligand shared between two neighboring subunits</note>
    </ligand>
</feature>
<feature type="binding site" evidence="1">
    <location>
        <position position="239"/>
    </location>
    <ligand>
        <name>L-methionine</name>
        <dbReference type="ChEBI" id="CHEBI:57844"/>
        <note>ligand shared between two neighboring subunits</note>
    </ligand>
</feature>
<feature type="binding site" description="in other chain" evidence="1">
    <location>
        <begin position="245"/>
        <end position="246"/>
    </location>
    <ligand>
        <name>ATP</name>
        <dbReference type="ChEBI" id="CHEBI:30616"/>
        <note>ligand shared between two neighboring subunits</note>
    </ligand>
</feature>
<feature type="binding site" evidence="1">
    <location>
        <position position="266"/>
    </location>
    <ligand>
        <name>ATP</name>
        <dbReference type="ChEBI" id="CHEBI:30616"/>
        <note>ligand shared between two neighboring subunits</note>
    </ligand>
</feature>
<feature type="binding site" description="in other chain" evidence="1">
    <location>
        <position position="270"/>
    </location>
    <ligand>
        <name>L-methionine</name>
        <dbReference type="ChEBI" id="CHEBI:57844"/>
        <note>ligand shared between two neighboring subunits</note>
    </ligand>
</feature>
<keyword id="KW-0067">ATP-binding</keyword>
<keyword id="KW-0963">Cytoplasm</keyword>
<keyword id="KW-0460">Magnesium</keyword>
<keyword id="KW-0479">Metal-binding</keyword>
<keyword id="KW-0547">Nucleotide-binding</keyword>
<keyword id="KW-0554">One-carbon metabolism</keyword>
<keyword id="KW-0630">Potassium</keyword>
<keyword id="KW-1185">Reference proteome</keyword>
<keyword id="KW-0808">Transferase</keyword>
<comment type="function">
    <text evidence="1">Catalyzes the formation of S-adenosylmethionine (AdoMet) from methionine and ATP. The overall synthetic reaction is composed of two sequential steps, AdoMet formation and the subsequent tripolyphosphate hydrolysis which occurs prior to release of AdoMet from the enzyme.</text>
</comment>
<comment type="catalytic activity">
    <reaction evidence="1">
        <text>L-methionine + ATP + H2O = S-adenosyl-L-methionine + phosphate + diphosphate</text>
        <dbReference type="Rhea" id="RHEA:21080"/>
        <dbReference type="ChEBI" id="CHEBI:15377"/>
        <dbReference type="ChEBI" id="CHEBI:30616"/>
        <dbReference type="ChEBI" id="CHEBI:33019"/>
        <dbReference type="ChEBI" id="CHEBI:43474"/>
        <dbReference type="ChEBI" id="CHEBI:57844"/>
        <dbReference type="ChEBI" id="CHEBI:59789"/>
        <dbReference type="EC" id="2.5.1.6"/>
    </reaction>
</comment>
<comment type="cofactor">
    <cofactor evidence="1">
        <name>Mg(2+)</name>
        <dbReference type="ChEBI" id="CHEBI:18420"/>
    </cofactor>
    <text evidence="1">Binds 2 divalent ions per subunit.</text>
</comment>
<comment type="cofactor">
    <cofactor evidence="1">
        <name>K(+)</name>
        <dbReference type="ChEBI" id="CHEBI:29103"/>
    </cofactor>
    <text evidence="1">Binds 1 potassium ion per subunit.</text>
</comment>
<comment type="pathway">
    <text evidence="1">Amino-acid biosynthesis; S-adenosyl-L-methionine biosynthesis; S-adenosyl-L-methionine from L-methionine: step 1/1.</text>
</comment>
<comment type="subunit">
    <text evidence="1">Homotetramer; dimer of dimers.</text>
</comment>
<comment type="subcellular location">
    <subcellularLocation>
        <location evidence="1">Cytoplasm</location>
    </subcellularLocation>
</comment>
<comment type="similarity">
    <text evidence="1">Belongs to the AdoMet synthase family.</text>
</comment>
<name>METK_ALKEH</name>
<evidence type="ECO:0000255" key="1">
    <source>
        <dbReference type="HAMAP-Rule" id="MF_00086"/>
    </source>
</evidence>
<proteinExistence type="inferred from homology"/>
<reference key="1">
    <citation type="submission" date="2006-08" db="EMBL/GenBank/DDBJ databases">
        <title>Complete sequence of Alkalilimnicola ehrilichei MLHE-1.</title>
        <authorList>
            <person name="Copeland A."/>
            <person name="Lucas S."/>
            <person name="Lapidus A."/>
            <person name="Barry K."/>
            <person name="Detter J.C."/>
            <person name="Glavina del Rio T."/>
            <person name="Hammon N."/>
            <person name="Israni S."/>
            <person name="Dalin E."/>
            <person name="Tice H."/>
            <person name="Pitluck S."/>
            <person name="Sims D."/>
            <person name="Brettin T."/>
            <person name="Bruce D."/>
            <person name="Han C."/>
            <person name="Tapia R."/>
            <person name="Gilna P."/>
            <person name="Schmutz J."/>
            <person name="Larimer F."/>
            <person name="Land M."/>
            <person name="Hauser L."/>
            <person name="Kyrpides N."/>
            <person name="Mikhailova N."/>
            <person name="Oremland R.S."/>
            <person name="Hoeft S.E."/>
            <person name="Switzer-Blum J."/>
            <person name="Kulp T."/>
            <person name="King G."/>
            <person name="Tabita R."/>
            <person name="Witte B."/>
            <person name="Santini J.M."/>
            <person name="Basu P."/>
            <person name="Hollibaugh J.T."/>
            <person name="Xie G."/>
            <person name="Stolz J.F."/>
            <person name="Richardson P."/>
        </authorList>
    </citation>
    <scope>NUCLEOTIDE SEQUENCE [LARGE SCALE GENOMIC DNA]</scope>
    <source>
        <strain>ATCC BAA-1101 / DSM 17681 / MLHE-1</strain>
    </source>
</reference>